<name>SYM1_CRYNB</name>
<proteinExistence type="inferred from homology"/>
<comment type="function">
    <text evidence="1">May be involved in cellular response to stress. Required to maintain mitochondrial DNA (mtDNA) integrity and stability (By similarity).</text>
</comment>
<comment type="subcellular location">
    <subcellularLocation>
        <location evidence="1">Mitochondrion inner membrane</location>
        <topology evidence="1">Multi-pass membrane protein</topology>
    </subcellularLocation>
</comment>
<comment type="similarity">
    <text evidence="3">Belongs to the peroxisomal membrane protein PXMP2/4 family.</text>
</comment>
<sequence length="190" mass="21318">MAGLMGKYAAFLTRRPVLGNMISSAVLFGTGDVIAQQLIEKKGADHDLPRTARIVTWGGILFAPTVNLWFRTLERIPIRSRWPATFARVGLDQFGFAPVILSGFFTAMTFMEGKDFNAAKVKWHESFFPTLQANWMLFIPFQILNMGLVPLQYRLLAVNAVNIPWNAFLSLQNAKGRKAEEDPVAISKKE</sequence>
<accession>P0CQ39</accession>
<accession>Q55Z20</accession>
<accession>Q5KND6</accession>
<protein>
    <recommendedName>
        <fullName>Protein SYM1</fullName>
    </recommendedName>
</protein>
<reference key="1">
    <citation type="journal article" date="2005" name="Science">
        <title>The genome of the basidiomycetous yeast and human pathogen Cryptococcus neoformans.</title>
        <authorList>
            <person name="Loftus B.J."/>
            <person name="Fung E."/>
            <person name="Roncaglia P."/>
            <person name="Rowley D."/>
            <person name="Amedeo P."/>
            <person name="Bruno D."/>
            <person name="Vamathevan J."/>
            <person name="Miranda M."/>
            <person name="Anderson I.J."/>
            <person name="Fraser J.A."/>
            <person name="Allen J.E."/>
            <person name="Bosdet I.E."/>
            <person name="Brent M.R."/>
            <person name="Chiu R."/>
            <person name="Doering T.L."/>
            <person name="Donlin M.J."/>
            <person name="D'Souza C.A."/>
            <person name="Fox D.S."/>
            <person name="Grinberg V."/>
            <person name="Fu J."/>
            <person name="Fukushima M."/>
            <person name="Haas B.J."/>
            <person name="Huang J.C."/>
            <person name="Janbon G."/>
            <person name="Jones S.J.M."/>
            <person name="Koo H.L."/>
            <person name="Krzywinski M.I."/>
            <person name="Kwon-Chung K.J."/>
            <person name="Lengeler K.B."/>
            <person name="Maiti R."/>
            <person name="Marra M.A."/>
            <person name="Marra R.E."/>
            <person name="Mathewson C.A."/>
            <person name="Mitchell T.G."/>
            <person name="Pertea M."/>
            <person name="Riggs F.R."/>
            <person name="Salzberg S.L."/>
            <person name="Schein J.E."/>
            <person name="Shvartsbeyn A."/>
            <person name="Shin H."/>
            <person name="Shumway M."/>
            <person name="Specht C.A."/>
            <person name="Suh B.B."/>
            <person name="Tenney A."/>
            <person name="Utterback T.R."/>
            <person name="Wickes B.L."/>
            <person name="Wortman J.R."/>
            <person name="Wye N.H."/>
            <person name="Kronstad J.W."/>
            <person name="Lodge J.K."/>
            <person name="Heitman J."/>
            <person name="Davis R.W."/>
            <person name="Fraser C.M."/>
            <person name="Hyman R.W."/>
        </authorList>
    </citation>
    <scope>NUCLEOTIDE SEQUENCE [LARGE SCALE GENOMIC DNA]</scope>
    <source>
        <strain>B-3501A</strain>
    </source>
</reference>
<dbReference type="EMBL" id="AAEY01000005">
    <property type="protein sequence ID" value="EAL22898.1"/>
    <property type="molecule type" value="Genomic_DNA"/>
</dbReference>
<dbReference type="RefSeq" id="XP_777545.1">
    <property type="nucleotide sequence ID" value="XM_772452.1"/>
</dbReference>
<dbReference type="EnsemblFungi" id="AAW41425">
    <property type="protein sequence ID" value="AAW41425"/>
    <property type="gene ID" value="CNA06860"/>
</dbReference>
<dbReference type="GeneID" id="4933932"/>
<dbReference type="KEGG" id="cnb:CNBA6670"/>
<dbReference type="VEuPathDB" id="FungiDB:CNBA6670"/>
<dbReference type="HOGENOM" id="CLU_049109_8_1_1"/>
<dbReference type="OrthoDB" id="474at5206"/>
<dbReference type="GO" id="GO:0005743">
    <property type="term" value="C:mitochondrial inner membrane"/>
    <property type="evidence" value="ECO:0007669"/>
    <property type="project" value="UniProtKB-SubCell"/>
</dbReference>
<dbReference type="GO" id="GO:0006067">
    <property type="term" value="P:ethanol metabolic process"/>
    <property type="evidence" value="ECO:0007669"/>
    <property type="project" value="EnsemblFungi"/>
</dbReference>
<dbReference type="InterPro" id="IPR007248">
    <property type="entry name" value="Mpv17_PMP22"/>
</dbReference>
<dbReference type="PANTHER" id="PTHR11266">
    <property type="entry name" value="PEROXISOMAL MEMBRANE PROTEIN 2, PXMP2 MPV17"/>
    <property type="match status" value="1"/>
</dbReference>
<dbReference type="PANTHER" id="PTHR11266:SF17">
    <property type="entry name" value="PROTEIN MPV17"/>
    <property type="match status" value="1"/>
</dbReference>
<dbReference type="Pfam" id="PF04117">
    <property type="entry name" value="Mpv17_PMP22"/>
    <property type="match status" value="1"/>
</dbReference>
<evidence type="ECO:0000250" key="1"/>
<evidence type="ECO:0000255" key="2"/>
<evidence type="ECO:0000305" key="3"/>
<keyword id="KW-0472">Membrane</keyword>
<keyword id="KW-0496">Mitochondrion</keyword>
<keyword id="KW-0999">Mitochondrion inner membrane</keyword>
<keyword id="KW-0812">Transmembrane</keyword>
<keyword id="KW-1133">Transmembrane helix</keyword>
<gene>
    <name type="primary">SYM1</name>
    <name type="ordered locus">CNBA6670</name>
</gene>
<organism>
    <name type="scientific">Cryptococcus neoformans var. neoformans serotype D (strain B-3501A)</name>
    <name type="common">Filobasidiella neoformans</name>
    <dbReference type="NCBI Taxonomy" id="283643"/>
    <lineage>
        <taxon>Eukaryota</taxon>
        <taxon>Fungi</taxon>
        <taxon>Dikarya</taxon>
        <taxon>Basidiomycota</taxon>
        <taxon>Agaricomycotina</taxon>
        <taxon>Tremellomycetes</taxon>
        <taxon>Tremellales</taxon>
        <taxon>Cryptococcaceae</taxon>
        <taxon>Cryptococcus</taxon>
        <taxon>Cryptococcus neoformans species complex</taxon>
    </lineage>
</organism>
<feature type="chain" id="PRO_0000410229" description="Protein SYM1">
    <location>
        <begin position="1"/>
        <end position="190"/>
    </location>
</feature>
<feature type="transmembrane region" description="Helical" evidence="2">
    <location>
        <begin position="16"/>
        <end position="36"/>
    </location>
</feature>
<feature type="transmembrane region" description="Helical" evidence="2">
    <location>
        <begin position="54"/>
        <end position="74"/>
    </location>
</feature>
<feature type="transmembrane region" description="Helical" evidence="2">
    <location>
        <begin position="91"/>
        <end position="111"/>
    </location>
</feature>
<feature type="transmembrane region" description="Helical" evidence="2">
    <location>
        <begin position="131"/>
        <end position="151"/>
    </location>
</feature>